<sequence>MATGKIVQVIGAVVDVEFPQDAVPRVYDALEVQNGNEKLVLEVQQQLGGGIVRTIAMGSSDGLRRGLDVKDLEHPIEVPVGKATLGRIMNVLGEPVDMKGEIGEEERWAIHRAAPSYEELSNSQELLETGIKVIDLMCPFAKGGKVGLFGGAGVGKTVNMMELIRNIAIEHSGYSVFAGVGERTREGNDFYHEMTDSNVIDKVSLVYGQMNEPPGNRLRVALTGLTMAEKFRDEGRDVLLFVDNIYRYTLAGTEVSALLGRMPSAVGYQPTLAEEMGVLQERITSTKTGSITSVQAVYVPADDLTDPSPATTFAHLDATVVLSRQIASLGIYPAVDPLDSTSRQLDPLVVGQEHYDTARGVQSILQRYQELKDIIAILGMDELSEEDKLVVARARKIQRFLSQPFFVAEVFTGSPGKYVSLKDTIRGFKGIMEGEYDHLPEQAFYMVGSIDEAVEKAKKL</sequence>
<keyword id="KW-0066">ATP synthesis</keyword>
<keyword id="KW-0067">ATP-binding</keyword>
<keyword id="KW-0997">Cell inner membrane</keyword>
<keyword id="KW-1003">Cell membrane</keyword>
<keyword id="KW-0139">CF(1)</keyword>
<keyword id="KW-0375">Hydrogen ion transport</keyword>
<keyword id="KW-0406">Ion transport</keyword>
<keyword id="KW-0472">Membrane</keyword>
<keyword id="KW-0547">Nucleotide-binding</keyword>
<keyword id="KW-1278">Translocase</keyword>
<keyword id="KW-0813">Transport</keyword>
<accession>C0Q2N2</accession>
<evidence type="ECO:0000255" key="1">
    <source>
        <dbReference type="HAMAP-Rule" id="MF_01347"/>
    </source>
</evidence>
<protein>
    <recommendedName>
        <fullName evidence="1">ATP synthase subunit beta</fullName>
        <ecNumber evidence="1">7.1.2.2</ecNumber>
    </recommendedName>
    <alternativeName>
        <fullName evidence="1">ATP synthase F1 sector subunit beta</fullName>
    </alternativeName>
    <alternativeName>
        <fullName evidence="1">F-ATPase subunit beta</fullName>
    </alternativeName>
</protein>
<organism>
    <name type="scientific">Salmonella paratyphi C (strain RKS4594)</name>
    <dbReference type="NCBI Taxonomy" id="476213"/>
    <lineage>
        <taxon>Bacteria</taxon>
        <taxon>Pseudomonadati</taxon>
        <taxon>Pseudomonadota</taxon>
        <taxon>Gammaproteobacteria</taxon>
        <taxon>Enterobacterales</taxon>
        <taxon>Enterobacteriaceae</taxon>
        <taxon>Salmonella</taxon>
    </lineage>
</organism>
<feature type="chain" id="PRO_1000166602" description="ATP synthase subunit beta">
    <location>
        <begin position="1"/>
        <end position="460"/>
    </location>
</feature>
<feature type="binding site" evidence="1">
    <location>
        <begin position="150"/>
        <end position="157"/>
    </location>
    <ligand>
        <name>ATP</name>
        <dbReference type="ChEBI" id="CHEBI:30616"/>
    </ligand>
</feature>
<gene>
    <name evidence="1" type="primary">atpD</name>
    <name type="ordered locus">SPC_3950</name>
</gene>
<name>ATPB_SALPC</name>
<proteinExistence type="inferred from homology"/>
<reference key="1">
    <citation type="journal article" date="2009" name="PLoS ONE">
        <title>Salmonella paratyphi C: genetic divergence from Salmonella choleraesuis and pathogenic convergence with Salmonella typhi.</title>
        <authorList>
            <person name="Liu W.-Q."/>
            <person name="Feng Y."/>
            <person name="Wang Y."/>
            <person name="Zou Q.-H."/>
            <person name="Chen F."/>
            <person name="Guo J.-T."/>
            <person name="Peng Y.-H."/>
            <person name="Jin Y."/>
            <person name="Li Y.-G."/>
            <person name="Hu S.-N."/>
            <person name="Johnston R.N."/>
            <person name="Liu G.-R."/>
            <person name="Liu S.-L."/>
        </authorList>
    </citation>
    <scope>NUCLEOTIDE SEQUENCE [LARGE SCALE GENOMIC DNA]</scope>
    <source>
        <strain>RKS4594</strain>
    </source>
</reference>
<comment type="function">
    <text evidence="1">Produces ATP from ADP in the presence of a proton gradient across the membrane. The catalytic sites are hosted primarily by the beta subunits.</text>
</comment>
<comment type="catalytic activity">
    <reaction evidence="1">
        <text>ATP + H2O + 4 H(+)(in) = ADP + phosphate + 5 H(+)(out)</text>
        <dbReference type="Rhea" id="RHEA:57720"/>
        <dbReference type="ChEBI" id="CHEBI:15377"/>
        <dbReference type="ChEBI" id="CHEBI:15378"/>
        <dbReference type="ChEBI" id="CHEBI:30616"/>
        <dbReference type="ChEBI" id="CHEBI:43474"/>
        <dbReference type="ChEBI" id="CHEBI:456216"/>
        <dbReference type="EC" id="7.1.2.2"/>
    </reaction>
</comment>
<comment type="subunit">
    <text evidence="1">F-type ATPases have 2 components, CF(1) - the catalytic core - and CF(0) - the membrane proton channel. CF(1) has five subunits: alpha(3), beta(3), gamma(1), delta(1), epsilon(1). CF(0) has three main subunits: a(1), b(2) and c(9-12). The alpha and beta chains form an alternating ring which encloses part of the gamma chain. CF(1) is attached to CF(0) by a central stalk formed by the gamma and epsilon chains, while a peripheral stalk is formed by the delta and b chains.</text>
</comment>
<comment type="subcellular location">
    <subcellularLocation>
        <location evidence="1">Cell inner membrane</location>
        <topology evidence="1">Peripheral membrane protein</topology>
    </subcellularLocation>
</comment>
<comment type="similarity">
    <text evidence="1">Belongs to the ATPase alpha/beta chains family.</text>
</comment>
<dbReference type="EC" id="7.1.2.2" evidence="1"/>
<dbReference type="EMBL" id="CP000857">
    <property type="protein sequence ID" value="ACN48018.1"/>
    <property type="molecule type" value="Genomic_DNA"/>
</dbReference>
<dbReference type="RefSeq" id="WP_000190499.1">
    <property type="nucleotide sequence ID" value="NC_012125.1"/>
</dbReference>
<dbReference type="SMR" id="C0Q2N2"/>
<dbReference type="GeneID" id="66758154"/>
<dbReference type="KEGG" id="sei:SPC_3950"/>
<dbReference type="HOGENOM" id="CLU_022398_0_2_6"/>
<dbReference type="Proteomes" id="UP000001599">
    <property type="component" value="Chromosome"/>
</dbReference>
<dbReference type="GO" id="GO:0005886">
    <property type="term" value="C:plasma membrane"/>
    <property type="evidence" value="ECO:0007669"/>
    <property type="project" value="UniProtKB-SubCell"/>
</dbReference>
<dbReference type="GO" id="GO:0045259">
    <property type="term" value="C:proton-transporting ATP synthase complex"/>
    <property type="evidence" value="ECO:0007669"/>
    <property type="project" value="UniProtKB-KW"/>
</dbReference>
<dbReference type="GO" id="GO:0005524">
    <property type="term" value="F:ATP binding"/>
    <property type="evidence" value="ECO:0007669"/>
    <property type="project" value="UniProtKB-UniRule"/>
</dbReference>
<dbReference type="GO" id="GO:0016887">
    <property type="term" value="F:ATP hydrolysis activity"/>
    <property type="evidence" value="ECO:0007669"/>
    <property type="project" value="InterPro"/>
</dbReference>
<dbReference type="GO" id="GO:0046933">
    <property type="term" value="F:proton-transporting ATP synthase activity, rotational mechanism"/>
    <property type="evidence" value="ECO:0007669"/>
    <property type="project" value="UniProtKB-UniRule"/>
</dbReference>
<dbReference type="CDD" id="cd18110">
    <property type="entry name" value="ATP-synt_F1_beta_C"/>
    <property type="match status" value="1"/>
</dbReference>
<dbReference type="CDD" id="cd18115">
    <property type="entry name" value="ATP-synt_F1_beta_N"/>
    <property type="match status" value="1"/>
</dbReference>
<dbReference type="CDD" id="cd01133">
    <property type="entry name" value="F1-ATPase_beta_CD"/>
    <property type="match status" value="1"/>
</dbReference>
<dbReference type="FunFam" id="1.10.1140.10:FF:000001">
    <property type="entry name" value="ATP synthase subunit beta"/>
    <property type="match status" value="1"/>
</dbReference>
<dbReference type="FunFam" id="2.40.10.170:FF:000003">
    <property type="entry name" value="ATP synthase subunit beta"/>
    <property type="match status" value="1"/>
</dbReference>
<dbReference type="FunFam" id="3.40.50.300:FF:000004">
    <property type="entry name" value="ATP synthase subunit beta"/>
    <property type="match status" value="1"/>
</dbReference>
<dbReference type="Gene3D" id="2.40.10.170">
    <property type="match status" value="1"/>
</dbReference>
<dbReference type="Gene3D" id="1.10.1140.10">
    <property type="entry name" value="Bovine Mitochondrial F1-atpase, Atp Synthase Beta Chain, Chain D, domain 3"/>
    <property type="match status" value="1"/>
</dbReference>
<dbReference type="Gene3D" id="3.40.50.300">
    <property type="entry name" value="P-loop containing nucleotide triphosphate hydrolases"/>
    <property type="match status" value="1"/>
</dbReference>
<dbReference type="HAMAP" id="MF_01347">
    <property type="entry name" value="ATP_synth_beta_bact"/>
    <property type="match status" value="1"/>
</dbReference>
<dbReference type="InterPro" id="IPR003593">
    <property type="entry name" value="AAA+_ATPase"/>
</dbReference>
<dbReference type="InterPro" id="IPR055190">
    <property type="entry name" value="ATP-synt_VA_C"/>
</dbReference>
<dbReference type="InterPro" id="IPR005722">
    <property type="entry name" value="ATP_synth_F1_bsu"/>
</dbReference>
<dbReference type="InterPro" id="IPR020003">
    <property type="entry name" value="ATPase_a/bsu_AS"/>
</dbReference>
<dbReference type="InterPro" id="IPR050053">
    <property type="entry name" value="ATPase_alpha/beta_chains"/>
</dbReference>
<dbReference type="InterPro" id="IPR004100">
    <property type="entry name" value="ATPase_F1/V1/A1_a/bsu_N"/>
</dbReference>
<dbReference type="InterPro" id="IPR036121">
    <property type="entry name" value="ATPase_F1/V1/A1_a/bsu_N_sf"/>
</dbReference>
<dbReference type="InterPro" id="IPR000194">
    <property type="entry name" value="ATPase_F1/V1/A1_a/bsu_nucl-bd"/>
</dbReference>
<dbReference type="InterPro" id="IPR024034">
    <property type="entry name" value="ATPase_F1/V1_b/a_C"/>
</dbReference>
<dbReference type="InterPro" id="IPR027417">
    <property type="entry name" value="P-loop_NTPase"/>
</dbReference>
<dbReference type="NCBIfam" id="TIGR01039">
    <property type="entry name" value="atpD"/>
    <property type="match status" value="1"/>
</dbReference>
<dbReference type="PANTHER" id="PTHR15184">
    <property type="entry name" value="ATP SYNTHASE"/>
    <property type="match status" value="1"/>
</dbReference>
<dbReference type="PANTHER" id="PTHR15184:SF71">
    <property type="entry name" value="ATP SYNTHASE SUBUNIT BETA, MITOCHONDRIAL"/>
    <property type="match status" value="1"/>
</dbReference>
<dbReference type="Pfam" id="PF00006">
    <property type="entry name" value="ATP-synt_ab"/>
    <property type="match status" value="1"/>
</dbReference>
<dbReference type="Pfam" id="PF02874">
    <property type="entry name" value="ATP-synt_ab_N"/>
    <property type="match status" value="1"/>
</dbReference>
<dbReference type="Pfam" id="PF22919">
    <property type="entry name" value="ATP-synt_VA_C"/>
    <property type="match status" value="1"/>
</dbReference>
<dbReference type="SMART" id="SM00382">
    <property type="entry name" value="AAA"/>
    <property type="match status" value="1"/>
</dbReference>
<dbReference type="SUPFAM" id="SSF47917">
    <property type="entry name" value="C-terminal domain of alpha and beta subunits of F1 ATP synthase"/>
    <property type="match status" value="1"/>
</dbReference>
<dbReference type="SUPFAM" id="SSF50615">
    <property type="entry name" value="N-terminal domain of alpha and beta subunits of F1 ATP synthase"/>
    <property type="match status" value="1"/>
</dbReference>
<dbReference type="SUPFAM" id="SSF52540">
    <property type="entry name" value="P-loop containing nucleoside triphosphate hydrolases"/>
    <property type="match status" value="1"/>
</dbReference>
<dbReference type="PROSITE" id="PS00152">
    <property type="entry name" value="ATPASE_ALPHA_BETA"/>
    <property type="match status" value="1"/>
</dbReference>